<comment type="function">
    <text evidence="1">The B regulatory subunit may modulate substrate selectivity and catalytic activity, and may also direct the localization of the catalytic enzyme to a particular subcellular compartment.</text>
</comment>
<comment type="subunit">
    <text evidence="1 3">PP2A consists of a common heteromeric enzyme, composed of a catalytic subunit (subunits C), a constant regulatory subunit (subunit A), and a variety of regulatory subunits such as subunits B (the R2/B/PR55/B55, R3/B''/PR72/PR130/PR59 and R5/B'/B56 families) (By similarity). Interacts with SIC/RON3 (PubMed:26888284).</text>
</comment>
<comment type="alternative products">
    <event type="alternative splicing"/>
    <isoform>
        <id>Q39247-1</id>
        <name>1</name>
        <sequence type="displayed"/>
    </isoform>
    <isoform>
        <id>Q39247-2</id>
        <name>2</name>
        <sequence type="described" ref="VSP_017095"/>
    </isoform>
</comment>
<comment type="tissue specificity">
    <text evidence="4">Expressed ubiquitously.</text>
</comment>
<comment type="similarity">
    <text evidence="6">Belongs to the phosphatase 2A regulatory subunit B family.</text>
</comment>
<sequence>MNGGDDAATSGPPPSLEWRFSQVFGERTAGEEVQEVDIISAIEFDKSGDHLATGDRGGRVVLFERTDTKDHGGSRKDLEQTDYPVRHPEFRYKTEFQSHEPEFDYLKSLEIEEKINKIRWCQPANGALFLLSTNDKTIKYWKVQEKKIKKISEMNIDPSESSNIPPQLVTNGLPADKGHDYLSKDFSFPPGGIPSLRLPVVVTSQETNLVARCRRVYAHAHDYHINSISNSSDGETFISADDLRVNLWNLEISNQSFNIVDVKPTNMEDLTEVITSAEFHPIHCNMLAYSSSKGSIRLIDMRQSALCDSHTKLFEEPEAPGSRSFFTEIIASISDIKFSKDGRYILSRDYMTLKLWDINMDSGPVASYQVHEHLRPRLCDLYENDSIFDKFECCLSGDGLRVATGSYSNLFRVFGASQGSTEAATLEASKNPMRRQIQTPARPSRSIGSMTRVVRRGSESPGTEANGNAYDFTTKLLHMAWHPTENSIACAAANSLYMYYA</sequence>
<evidence type="ECO:0000250" key="1"/>
<evidence type="ECO:0000256" key="2">
    <source>
        <dbReference type="SAM" id="MobiDB-lite"/>
    </source>
</evidence>
<evidence type="ECO:0000269" key="3">
    <source>
    </source>
</evidence>
<evidence type="ECO:0000269" key="4">
    <source>
    </source>
</evidence>
<evidence type="ECO:0000303" key="5">
    <source>
    </source>
</evidence>
<evidence type="ECO:0000305" key="6"/>
<evidence type="ECO:0007744" key="7">
    <source>
    </source>
</evidence>
<feature type="chain" id="PRO_0000071439" description="Serine/threonine protein phosphatase 2A 55 kDa regulatory subunit B beta isoform">
    <location>
        <begin position="1"/>
        <end position="501"/>
    </location>
</feature>
<feature type="repeat" description="WD 1">
    <location>
        <begin position="34"/>
        <end position="73"/>
    </location>
</feature>
<feature type="repeat" description="WD 2">
    <location>
        <begin position="110"/>
        <end position="151"/>
    </location>
</feature>
<feature type="repeat" description="WD 3">
    <location>
        <begin position="220"/>
        <end position="258"/>
    </location>
</feature>
<feature type="repeat" description="WD 4">
    <location>
        <begin position="269"/>
        <end position="309"/>
    </location>
</feature>
<feature type="repeat" description="WD 5">
    <location>
        <begin position="328"/>
        <end position="366"/>
    </location>
</feature>
<feature type="repeat" description="WD 6">
    <location>
        <begin position="471"/>
        <end position="501"/>
    </location>
</feature>
<feature type="region of interest" description="Disordered" evidence="2">
    <location>
        <begin position="439"/>
        <end position="466"/>
    </location>
</feature>
<feature type="compositionally biased region" description="Polar residues" evidence="2">
    <location>
        <begin position="439"/>
        <end position="449"/>
    </location>
</feature>
<feature type="modified residue" description="N-acetylmethionine" evidence="7">
    <location>
        <position position="1"/>
    </location>
</feature>
<feature type="splice variant" id="VSP_017095" description="In isoform 2." evidence="5">
    <location>
        <position position="200"/>
    </location>
</feature>
<reference key="1">
    <citation type="journal article" date="1996" name="Plant Mol. Biol.">
        <title>Characterization of DNA sequences encoding a novel isoform of the 55 kDa B regulatory subunit of the type 2A protein serine/threonine phosphatase of Arabidopsis thaliana.</title>
        <authorList>
            <person name="Corum J.W. III"/>
            <person name="Hartung A.J."/>
            <person name="Stamey R.T."/>
            <person name="Rundle S.J."/>
        </authorList>
    </citation>
    <scope>NUCLEOTIDE SEQUENCE [MRNA] (ISOFORM 1)</scope>
    <scope>TISSUE SPECIFICITY</scope>
    <source>
        <strain>cv. Columbia</strain>
    </source>
</reference>
<reference key="2">
    <citation type="journal article" date="2000" name="Nature">
        <title>Sequence and analysis of chromosome 1 of the plant Arabidopsis thaliana.</title>
        <authorList>
            <person name="Theologis A."/>
            <person name="Ecker J.R."/>
            <person name="Palm C.J."/>
            <person name="Federspiel N.A."/>
            <person name="Kaul S."/>
            <person name="White O."/>
            <person name="Alonso J."/>
            <person name="Altafi H."/>
            <person name="Araujo R."/>
            <person name="Bowman C.L."/>
            <person name="Brooks S.Y."/>
            <person name="Buehler E."/>
            <person name="Chan A."/>
            <person name="Chao Q."/>
            <person name="Chen H."/>
            <person name="Cheuk R.F."/>
            <person name="Chin C.W."/>
            <person name="Chung M.K."/>
            <person name="Conn L."/>
            <person name="Conway A.B."/>
            <person name="Conway A.R."/>
            <person name="Creasy T.H."/>
            <person name="Dewar K."/>
            <person name="Dunn P."/>
            <person name="Etgu P."/>
            <person name="Feldblyum T.V."/>
            <person name="Feng J.-D."/>
            <person name="Fong B."/>
            <person name="Fujii C.Y."/>
            <person name="Gill J.E."/>
            <person name="Goldsmith A.D."/>
            <person name="Haas B."/>
            <person name="Hansen N.F."/>
            <person name="Hughes B."/>
            <person name="Huizar L."/>
            <person name="Hunter J.L."/>
            <person name="Jenkins J."/>
            <person name="Johnson-Hopson C."/>
            <person name="Khan S."/>
            <person name="Khaykin E."/>
            <person name="Kim C.J."/>
            <person name="Koo H.L."/>
            <person name="Kremenetskaia I."/>
            <person name="Kurtz D.B."/>
            <person name="Kwan A."/>
            <person name="Lam B."/>
            <person name="Langin-Hooper S."/>
            <person name="Lee A."/>
            <person name="Lee J.M."/>
            <person name="Lenz C.A."/>
            <person name="Li J.H."/>
            <person name="Li Y.-P."/>
            <person name="Lin X."/>
            <person name="Liu S.X."/>
            <person name="Liu Z.A."/>
            <person name="Luros J.S."/>
            <person name="Maiti R."/>
            <person name="Marziali A."/>
            <person name="Militscher J."/>
            <person name="Miranda M."/>
            <person name="Nguyen M."/>
            <person name="Nierman W.C."/>
            <person name="Osborne B.I."/>
            <person name="Pai G."/>
            <person name="Peterson J."/>
            <person name="Pham P.K."/>
            <person name="Rizzo M."/>
            <person name="Rooney T."/>
            <person name="Rowley D."/>
            <person name="Sakano H."/>
            <person name="Salzberg S.L."/>
            <person name="Schwartz J.R."/>
            <person name="Shinn P."/>
            <person name="Southwick A.M."/>
            <person name="Sun H."/>
            <person name="Tallon L.J."/>
            <person name="Tambunga G."/>
            <person name="Toriumi M.J."/>
            <person name="Town C.D."/>
            <person name="Utterback T."/>
            <person name="Van Aken S."/>
            <person name="Vaysberg M."/>
            <person name="Vysotskaia V.S."/>
            <person name="Walker M."/>
            <person name="Wu D."/>
            <person name="Yu G."/>
            <person name="Fraser C.M."/>
            <person name="Venter J.C."/>
            <person name="Davis R.W."/>
        </authorList>
    </citation>
    <scope>NUCLEOTIDE SEQUENCE [LARGE SCALE GENOMIC DNA]</scope>
    <source>
        <strain>cv. Columbia</strain>
    </source>
</reference>
<reference key="3">
    <citation type="journal article" date="2017" name="Plant J.">
        <title>Araport11: a complete reannotation of the Arabidopsis thaliana reference genome.</title>
        <authorList>
            <person name="Cheng C.Y."/>
            <person name="Krishnakumar V."/>
            <person name="Chan A.P."/>
            <person name="Thibaud-Nissen F."/>
            <person name="Schobel S."/>
            <person name="Town C.D."/>
        </authorList>
    </citation>
    <scope>GENOME REANNOTATION</scope>
    <source>
        <strain>cv. Columbia</strain>
    </source>
</reference>
<reference key="4">
    <citation type="journal article" date="2003" name="Science">
        <title>Empirical analysis of transcriptional activity in the Arabidopsis genome.</title>
        <authorList>
            <person name="Yamada K."/>
            <person name="Lim J."/>
            <person name="Dale J.M."/>
            <person name="Chen H."/>
            <person name="Shinn P."/>
            <person name="Palm C.J."/>
            <person name="Southwick A.M."/>
            <person name="Wu H.C."/>
            <person name="Kim C.J."/>
            <person name="Nguyen M."/>
            <person name="Pham P.K."/>
            <person name="Cheuk R.F."/>
            <person name="Karlin-Newmann G."/>
            <person name="Liu S.X."/>
            <person name="Lam B."/>
            <person name="Sakano H."/>
            <person name="Wu T."/>
            <person name="Yu G."/>
            <person name="Miranda M."/>
            <person name="Quach H.L."/>
            <person name="Tripp M."/>
            <person name="Chang C.H."/>
            <person name="Lee J.M."/>
            <person name="Toriumi M.J."/>
            <person name="Chan M.M."/>
            <person name="Tang C.C."/>
            <person name="Onodera C.S."/>
            <person name="Deng J.M."/>
            <person name="Akiyama K."/>
            <person name="Ansari Y."/>
            <person name="Arakawa T."/>
            <person name="Banh J."/>
            <person name="Banno F."/>
            <person name="Bowser L."/>
            <person name="Brooks S.Y."/>
            <person name="Carninci P."/>
            <person name="Chao Q."/>
            <person name="Choy N."/>
            <person name="Enju A."/>
            <person name="Goldsmith A.D."/>
            <person name="Gurjal M."/>
            <person name="Hansen N.F."/>
            <person name="Hayashizaki Y."/>
            <person name="Johnson-Hopson C."/>
            <person name="Hsuan V.W."/>
            <person name="Iida K."/>
            <person name="Karnes M."/>
            <person name="Khan S."/>
            <person name="Koesema E."/>
            <person name="Ishida J."/>
            <person name="Jiang P.X."/>
            <person name="Jones T."/>
            <person name="Kawai J."/>
            <person name="Kamiya A."/>
            <person name="Meyers C."/>
            <person name="Nakajima M."/>
            <person name="Narusaka M."/>
            <person name="Seki M."/>
            <person name="Sakurai T."/>
            <person name="Satou M."/>
            <person name="Tamse R."/>
            <person name="Vaysberg M."/>
            <person name="Wallender E.K."/>
            <person name="Wong C."/>
            <person name="Yamamura Y."/>
            <person name="Yuan S."/>
            <person name="Shinozaki K."/>
            <person name="Davis R.W."/>
            <person name="Theologis A."/>
            <person name="Ecker J.R."/>
        </authorList>
    </citation>
    <scope>NUCLEOTIDE SEQUENCE [LARGE SCALE MRNA] (ISOFORMS 1 AND 2)</scope>
    <source>
        <strain>cv. Columbia</strain>
    </source>
</reference>
<reference key="5">
    <citation type="journal article" date="2012" name="Mol. Cell. Proteomics">
        <title>Comparative large-scale characterisation of plant vs. mammal proteins reveals similar and idiosyncratic N-alpha acetylation features.</title>
        <authorList>
            <person name="Bienvenut W.V."/>
            <person name="Sumpton D."/>
            <person name="Martinez A."/>
            <person name="Lilla S."/>
            <person name="Espagne C."/>
            <person name="Meinnel T."/>
            <person name="Giglione C."/>
        </authorList>
    </citation>
    <scope>ACETYLATION [LARGE SCALE ANALYSIS] AT MET-1</scope>
    <scope>IDENTIFICATION BY MASS SPECTROMETRY [LARGE SCALE ANALYSIS]</scope>
</reference>
<reference key="6">
    <citation type="journal article" date="2016" name="Proc. Natl. Acad. Sci. U.S.A.">
        <title>ROTUNDA3 function in plant development by phosphatase 2A-mediated regulation of auxin transporter recycling.</title>
        <authorList>
            <person name="Karampelias M."/>
            <person name="Neyt P."/>
            <person name="De Groeve S."/>
            <person name="Aesaert S."/>
            <person name="Coussens G."/>
            <person name="Rolcik J."/>
            <person name="Bruno L."/>
            <person name="De Winne N."/>
            <person name="Van Minnebruggen A."/>
            <person name="Van Montagu M."/>
            <person name="Ponce M.R."/>
            <person name="Micol J.L."/>
            <person name="Friml J."/>
            <person name="De Jaeger G."/>
            <person name="Van Lijsebettens M."/>
        </authorList>
    </citation>
    <scope>INTERACTION WITH SIC/RON3</scope>
    <source>
        <strain>cv. Columbia</strain>
        <strain>cv. Landsberg erecta</strain>
    </source>
</reference>
<dbReference type="EMBL" id="U40161">
    <property type="protein sequence ID" value="AAB60777.1"/>
    <property type="molecule type" value="mRNA"/>
</dbReference>
<dbReference type="EMBL" id="AC034257">
    <property type="protein sequence ID" value="AAF99812.1"/>
    <property type="molecule type" value="Genomic_DNA"/>
</dbReference>
<dbReference type="EMBL" id="CP002684">
    <property type="protein sequence ID" value="AEE29626.1"/>
    <property type="molecule type" value="Genomic_DNA"/>
</dbReference>
<dbReference type="EMBL" id="CP002684">
    <property type="protein sequence ID" value="AEE29627.1"/>
    <property type="molecule type" value="Genomic_DNA"/>
</dbReference>
<dbReference type="EMBL" id="AF370519">
    <property type="protein sequence ID" value="AAK43896.1"/>
    <property type="molecule type" value="mRNA"/>
</dbReference>
<dbReference type="EMBL" id="AY045665">
    <property type="protein sequence ID" value="AAK74023.1"/>
    <property type="molecule type" value="mRNA"/>
</dbReference>
<dbReference type="EMBL" id="BT000645">
    <property type="protein sequence ID" value="AAN18211.1"/>
    <property type="molecule type" value="mRNA"/>
</dbReference>
<dbReference type="EMBL" id="BT002183">
    <property type="protein sequence ID" value="AAN72194.1"/>
    <property type="molecule type" value="mRNA"/>
</dbReference>
<dbReference type="PIR" id="B86312">
    <property type="entry name" value="B86312"/>
</dbReference>
<dbReference type="RefSeq" id="NP_564033.1">
    <molecule id="Q39247-1"/>
    <property type="nucleotide sequence ID" value="NM_101634.4"/>
</dbReference>
<dbReference type="RefSeq" id="NP_849681.1">
    <molecule id="Q39247-2"/>
    <property type="nucleotide sequence ID" value="NM_179350.4"/>
</dbReference>
<dbReference type="SMR" id="Q39247"/>
<dbReference type="BioGRID" id="23588">
    <property type="interactions" value="24"/>
</dbReference>
<dbReference type="FunCoup" id="Q39247">
    <property type="interactions" value="4172"/>
</dbReference>
<dbReference type="IntAct" id="Q39247">
    <property type="interactions" value="3"/>
</dbReference>
<dbReference type="STRING" id="3702.Q39247"/>
<dbReference type="iPTMnet" id="Q39247"/>
<dbReference type="PaxDb" id="3702-AT1G17720.1"/>
<dbReference type="ProteomicsDB" id="244591">
    <molecule id="Q39247-1"/>
</dbReference>
<dbReference type="EnsemblPlants" id="AT1G17720.1">
    <molecule id="Q39247-1"/>
    <property type="protein sequence ID" value="AT1G17720.1"/>
    <property type="gene ID" value="AT1G17720"/>
</dbReference>
<dbReference type="EnsemblPlants" id="AT1G17720.2">
    <molecule id="Q39247-2"/>
    <property type="protein sequence ID" value="AT1G17720.2"/>
    <property type="gene ID" value="AT1G17720"/>
</dbReference>
<dbReference type="GeneID" id="838348"/>
<dbReference type="Gramene" id="AT1G17720.1">
    <molecule id="Q39247-1"/>
    <property type="protein sequence ID" value="AT1G17720.1"/>
    <property type="gene ID" value="AT1G17720"/>
</dbReference>
<dbReference type="Gramene" id="AT1G17720.2">
    <molecule id="Q39247-2"/>
    <property type="protein sequence ID" value="AT1G17720.2"/>
    <property type="gene ID" value="AT1G17720"/>
</dbReference>
<dbReference type="KEGG" id="ath:AT1G17720"/>
<dbReference type="Araport" id="AT1G17720"/>
<dbReference type="TAIR" id="AT1G17720">
    <property type="gene designation" value="ATB BETA"/>
</dbReference>
<dbReference type="eggNOG" id="KOG1354">
    <property type="taxonomic scope" value="Eukaryota"/>
</dbReference>
<dbReference type="HOGENOM" id="CLU_021713_3_3_1"/>
<dbReference type="InParanoid" id="Q39247"/>
<dbReference type="OMA" id="KWCRRTN"/>
<dbReference type="OrthoDB" id="6274823at2759"/>
<dbReference type="PhylomeDB" id="Q39247"/>
<dbReference type="PRO" id="PR:Q39247"/>
<dbReference type="Proteomes" id="UP000006548">
    <property type="component" value="Chromosome 1"/>
</dbReference>
<dbReference type="ExpressionAtlas" id="Q39247">
    <property type="expression patterns" value="baseline and differential"/>
</dbReference>
<dbReference type="GO" id="GO:0005634">
    <property type="term" value="C:nucleus"/>
    <property type="evidence" value="ECO:0007005"/>
    <property type="project" value="TAIR"/>
</dbReference>
<dbReference type="GO" id="GO:0000159">
    <property type="term" value="C:protein phosphatase type 2A complex"/>
    <property type="evidence" value="ECO:0000250"/>
    <property type="project" value="TAIR"/>
</dbReference>
<dbReference type="GO" id="GO:0019888">
    <property type="term" value="F:protein phosphatase regulator activity"/>
    <property type="evidence" value="ECO:0007669"/>
    <property type="project" value="InterPro"/>
</dbReference>
<dbReference type="GO" id="GO:0006470">
    <property type="term" value="P:protein dephosphorylation"/>
    <property type="evidence" value="ECO:0000250"/>
    <property type="project" value="TAIR"/>
</dbReference>
<dbReference type="FunFam" id="2.130.10.10:FF:000569">
    <property type="entry name" value="Serine/threonine-protein phosphatase 2A 55 kDa regulatory subunit B"/>
    <property type="match status" value="1"/>
</dbReference>
<dbReference type="FunFam" id="2.130.10.10:FF:000609">
    <property type="entry name" value="Serine/threonine-protein phosphatase 2A 55 kDa regulatory subunit B"/>
    <property type="match status" value="1"/>
</dbReference>
<dbReference type="Gene3D" id="2.130.10.10">
    <property type="entry name" value="YVTN repeat-like/Quinoprotein amine dehydrogenase"/>
    <property type="match status" value="3"/>
</dbReference>
<dbReference type="InterPro" id="IPR000009">
    <property type="entry name" value="PP2A_PR55"/>
</dbReference>
<dbReference type="InterPro" id="IPR018067">
    <property type="entry name" value="PP2A_PR55_CS"/>
</dbReference>
<dbReference type="InterPro" id="IPR015943">
    <property type="entry name" value="WD40/YVTN_repeat-like_dom_sf"/>
</dbReference>
<dbReference type="InterPro" id="IPR036322">
    <property type="entry name" value="WD40_repeat_dom_sf"/>
</dbReference>
<dbReference type="InterPro" id="IPR001680">
    <property type="entry name" value="WD40_rpt"/>
</dbReference>
<dbReference type="PANTHER" id="PTHR11871">
    <property type="entry name" value="PROTEIN PHOSPHATASE PP2A REGULATORY SUBUNIT B"/>
    <property type="match status" value="1"/>
</dbReference>
<dbReference type="Pfam" id="PF00400">
    <property type="entry name" value="WD40"/>
    <property type="match status" value="2"/>
</dbReference>
<dbReference type="PIRSF" id="PIRSF037309">
    <property type="entry name" value="PP2A_PR55"/>
    <property type="match status" value="1"/>
</dbReference>
<dbReference type="PRINTS" id="PR00600">
    <property type="entry name" value="PP2APR55"/>
</dbReference>
<dbReference type="SMART" id="SM00320">
    <property type="entry name" value="WD40"/>
    <property type="match status" value="5"/>
</dbReference>
<dbReference type="SUPFAM" id="SSF50978">
    <property type="entry name" value="WD40 repeat-like"/>
    <property type="match status" value="1"/>
</dbReference>
<dbReference type="PROSITE" id="PS01024">
    <property type="entry name" value="PR55_1"/>
    <property type="match status" value="1"/>
</dbReference>
<dbReference type="PROSITE" id="PS01025">
    <property type="entry name" value="PR55_2"/>
    <property type="match status" value="1"/>
</dbReference>
<dbReference type="PROSITE" id="PS00678">
    <property type="entry name" value="WD_REPEATS_1"/>
    <property type="match status" value="1"/>
</dbReference>
<keyword id="KW-0007">Acetylation</keyword>
<keyword id="KW-0025">Alternative splicing</keyword>
<keyword id="KW-1185">Reference proteome</keyword>
<keyword id="KW-0677">Repeat</keyword>
<keyword id="KW-0853">WD repeat</keyword>
<proteinExistence type="evidence at protein level"/>
<name>2ABB_ARATH</name>
<gene>
    <name type="primary">PP2AB2</name>
    <name type="ordered locus">At1g17720</name>
    <name type="ORF">F11A6.6</name>
</gene>
<organism>
    <name type="scientific">Arabidopsis thaliana</name>
    <name type="common">Mouse-ear cress</name>
    <dbReference type="NCBI Taxonomy" id="3702"/>
    <lineage>
        <taxon>Eukaryota</taxon>
        <taxon>Viridiplantae</taxon>
        <taxon>Streptophyta</taxon>
        <taxon>Embryophyta</taxon>
        <taxon>Tracheophyta</taxon>
        <taxon>Spermatophyta</taxon>
        <taxon>Magnoliopsida</taxon>
        <taxon>eudicotyledons</taxon>
        <taxon>Gunneridae</taxon>
        <taxon>Pentapetalae</taxon>
        <taxon>rosids</taxon>
        <taxon>malvids</taxon>
        <taxon>Brassicales</taxon>
        <taxon>Brassicaceae</taxon>
        <taxon>Camelineae</taxon>
        <taxon>Arabidopsis</taxon>
    </lineage>
</organism>
<accession>Q39247</accession>
<accession>Q9FZ61</accession>
<protein>
    <recommendedName>
        <fullName>Serine/threonine protein phosphatase 2A 55 kDa regulatory subunit B beta isoform</fullName>
        <shortName>AtB beta</shortName>
        <shortName>PP2A, subunit B, beta isoform</shortName>
    </recommendedName>
</protein>